<accession>P81638</accession>
<gene>
    <name type="primary">fdxA</name>
</gene>
<keyword id="KW-0004">4Fe-4S</keyword>
<keyword id="KW-0903">Direct protein sequencing</keyword>
<keyword id="KW-0249">Electron transport</keyword>
<keyword id="KW-0408">Iron</keyword>
<keyword id="KW-0411">Iron-sulfur</keyword>
<keyword id="KW-0479">Metal-binding</keyword>
<keyword id="KW-0813">Transport</keyword>
<evidence type="ECO:0000250" key="1"/>
<evidence type="ECO:0000255" key="2">
    <source>
        <dbReference type="PROSITE-ProRule" id="PRU00711"/>
    </source>
</evidence>
<name>FER_PYRWO</name>
<comment type="function">
    <text>Ferredoxins are iron-sulfur proteins that transfer electrons in a wide variety of metabolic reactions.</text>
</comment>
<comment type="cofactor">
    <cofactor>
        <name>[4Fe-4S] cluster</name>
        <dbReference type="ChEBI" id="CHEBI:49883"/>
    </cofactor>
    <text>Binds 1 [4Fe-4S] cluster.</text>
</comment>
<comment type="subunit">
    <text evidence="1">Monomer.</text>
</comment>
<feature type="chain" id="PRO_0000159201" description="Ferredoxin">
    <location>
        <begin position="1"/>
        <end position="21" status="greater than"/>
    </location>
</feature>
<feature type="domain" description="4Fe-4S ferredoxin-type" evidence="2">
    <location>
        <begin position="2"/>
        <end position="21" status="greater than"/>
    </location>
</feature>
<feature type="binding site" evidence="1">
    <location>
        <position position="10"/>
    </location>
    <ligand>
        <name>[4Fe-4S] cluster</name>
        <dbReference type="ChEBI" id="CHEBI:49883"/>
    </ligand>
</feature>
<feature type="binding site" evidence="1">
    <location>
        <position position="13"/>
    </location>
    <ligand>
        <name>[4Fe-4S] cluster</name>
        <dbReference type="ChEBI" id="CHEBI:49883"/>
    </ligand>
</feature>
<feature type="binding site" evidence="1">
    <location>
        <position position="16"/>
    </location>
    <ligand>
        <name>[4Fe-4S] cluster</name>
        <dbReference type="ChEBI" id="CHEBI:49883"/>
    </ligand>
</feature>
<feature type="non-terminal residue">
    <location>
        <position position="21"/>
    </location>
</feature>
<organism>
    <name type="scientific">Pyrococcus woesei</name>
    <dbReference type="NCBI Taxonomy" id="2262"/>
    <lineage>
        <taxon>Archaea</taxon>
        <taxon>Methanobacteriati</taxon>
        <taxon>Methanobacteriota</taxon>
        <taxon>Thermococci</taxon>
        <taxon>Thermococcales</taxon>
        <taxon>Thermococcaceae</taxon>
        <taxon>Pyrococcus</taxon>
    </lineage>
</organism>
<proteinExistence type="evidence at protein level"/>
<protein>
    <recommendedName>
        <fullName>Ferredoxin</fullName>
    </recommendedName>
</protein>
<sequence>MKVKVDADACIGCGVCVELCP</sequence>
<reference key="1">
    <citation type="journal article" date="2000" name="Anaerobe">
        <title>Purification and characterization of ferredoxin from the hyperthermophilic Pyrococcus woesei.</title>
        <authorList>
            <person name="Blamey J.M."/>
            <person name="Chiong M."/>
            <person name="Lopez C."/>
            <person name="Smith E.T."/>
        </authorList>
    </citation>
    <scope>PROTEIN SEQUENCE</scope>
    <source>
        <strain>ATCC 49860 / DSM 3773 / JCM 8421 / Vul4</strain>
    </source>
</reference>
<dbReference type="GO" id="GO:0051539">
    <property type="term" value="F:4 iron, 4 sulfur cluster binding"/>
    <property type="evidence" value="ECO:0007669"/>
    <property type="project" value="UniProtKB-KW"/>
</dbReference>
<dbReference type="GO" id="GO:0046872">
    <property type="term" value="F:metal ion binding"/>
    <property type="evidence" value="ECO:0007669"/>
    <property type="project" value="UniProtKB-KW"/>
</dbReference>
<dbReference type="GO" id="GO:0016491">
    <property type="term" value="F:oxidoreductase activity"/>
    <property type="evidence" value="ECO:0007669"/>
    <property type="project" value="UniProtKB-ARBA"/>
</dbReference>
<dbReference type="Gene3D" id="3.30.70.20">
    <property type="match status" value="1"/>
</dbReference>
<dbReference type="InterPro" id="IPR017896">
    <property type="entry name" value="4Fe4S_Fe-S-bd"/>
</dbReference>
<dbReference type="InterPro" id="IPR017900">
    <property type="entry name" value="4Fe4S_Fe_S_CS"/>
</dbReference>
<dbReference type="Pfam" id="PF12797">
    <property type="entry name" value="Fer4_2"/>
    <property type="match status" value="1"/>
</dbReference>
<dbReference type="SUPFAM" id="SSF54862">
    <property type="entry name" value="4Fe-4S ferredoxins"/>
    <property type="match status" value="1"/>
</dbReference>
<dbReference type="PROSITE" id="PS00198">
    <property type="entry name" value="4FE4S_FER_1"/>
    <property type="match status" value="1"/>
</dbReference>
<dbReference type="PROSITE" id="PS51379">
    <property type="entry name" value="4FE4S_FER_2"/>
    <property type="match status" value="1"/>
</dbReference>